<keyword id="KW-0004">4Fe-4S</keyword>
<keyword id="KW-0408">Iron</keyword>
<keyword id="KW-0411">Iron-sulfur</keyword>
<keyword id="KW-0414">Isoprene biosynthesis</keyword>
<keyword id="KW-0479">Metal-binding</keyword>
<keyword id="KW-0560">Oxidoreductase</keyword>
<keyword id="KW-1185">Reference proteome</keyword>
<protein>
    <recommendedName>
        <fullName evidence="1">4-hydroxy-3-methylbut-2-en-1-yl diphosphate synthase (flavodoxin)</fullName>
        <ecNumber evidence="1">1.17.7.3</ecNumber>
    </recommendedName>
    <alternativeName>
        <fullName evidence="1">1-hydroxy-2-methyl-2-(E)-butenyl 4-diphosphate synthase</fullName>
    </alternativeName>
</protein>
<evidence type="ECO:0000255" key="1">
    <source>
        <dbReference type="HAMAP-Rule" id="MF_00159"/>
    </source>
</evidence>
<dbReference type="EC" id="1.17.7.3" evidence="1"/>
<dbReference type="EMBL" id="CP000468">
    <property type="protein sequence ID" value="ABJ01943.1"/>
    <property type="molecule type" value="Genomic_DNA"/>
</dbReference>
<dbReference type="RefSeq" id="WP_000551807.1">
    <property type="nucleotide sequence ID" value="NZ_CADILS010000012.1"/>
</dbReference>
<dbReference type="SMR" id="A1AE53"/>
<dbReference type="GeneID" id="86947404"/>
<dbReference type="KEGG" id="ecv:APECO1_4009"/>
<dbReference type="HOGENOM" id="CLU_042258_0_0_6"/>
<dbReference type="UniPathway" id="UPA00056">
    <property type="reaction ID" value="UER00096"/>
</dbReference>
<dbReference type="Proteomes" id="UP000008216">
    <property type="component" value="Chromosome"/>
</dbReference>
<dbReference type="GO" id="GO:0051539">
    <property type="term" value="F:4 iron, 4 sulfur cluster binding"/>
    <property type="evidence" value="ECO:0007669"/>
    <property type="project" value="UniProtKB-UniRule"/>
</dbReference>
<dbReference type="GO" id="GO:0046429">
    <property type="term" value="F:4-hydroxy-3-methylbut-2-en-1-yl diphosphate synthase activity (ferredoxin)"/>
    <property type="evidence" value="ECO:0007669"/>
    <property type="project" value="UniProtKB-UniRule"/>
</dbReference>
<dbReference type="GO" id="GO:0141197">
    <property type="term" value="F:4-hydroxy-3-methylbut-2-enyl-diphosphate synthase activity (flavodoxin)"/>
    <property type="evidence" value="ECO:0007669"/>
    <property type="project" value="UniProtKB-EC"/>
</dbReference>
<dbReference type="GO" id="GO:0005506">
    <property type="term" value="F:iron ion binding"/>
    <property type="evidence" value="ECO:0007669"/>
    <property type="project" value="InterPro"/>
</dbReference>
<dbReference type="GO" id="GO:0019288">
    <property type="term" value="P:isopentenyl diphosphate biosynthetic process, methylerythritol 4-phosphate pathway"/>
    <property type="evidence" value="ECO:0007669"/>
    <property type="project" value="UniProtKB-UniRule"/>
</dbReference>
<dbReference type="GO" id="GO:0016114">
    <property type="term" value="P:terpenoid biosynthetic process"/>
    <property type="evidence" value="ECO:0007669"/>
    <property type="project" value="InterPro"/>
</dbReference>
<dbReference type="FunFam" id="3.20.20.20:FF:000001">
    <property type="entry name" value="4-hydroxy-3-methylbut-2-en-1-yl diphosphate synthase (flavodoxin)"/>
    <property type="match status" value="1"/>
</dbReference>
<dbReference type="FunFam" id="3.30.413.10:FF:000002">
    <property type="entry name" value="4-hydroxy-3-methylbut-2-en-1-yl diphosphate synthase (flavodoxin)"/>
    <property type="match status" value="1"/>
</dbReference>
<dbReference type="Gene3D" id="3.20.20.20">
    <property type="entry name" value="Dihydropteroate synthase-like"/>
    <property type="match status" value="1"/>
</dbReference>
<dbReference type="Gene3D" id="3.30.413.10">
    <property type="entry name" value="Sulfite Reductase Hemoprotein, domain 1"/>
    <property type="match status" value="1"/>
</dbReference>
<dbReference type="HAMAP" id="MF_00159">
    <property type="entry name" value="IspG"/>
    <property type="match status" value="1"/>
</dbReference>
<dbReference type="InterPro" id="IPR011005">
    <property type="entry name" value="Dihydropteroate_synth-like_sf"/>
</dbReference>
<dbReference type="InterPro" id="IPR016425">
    <property type="entry name" value="IspG_bac"/>
</dbReference>
<dbReference type="InterPro" id="IPR004588">
    <property type="entry name" value="IspG_bac-typ"/>
</dbReference>
<dbReference type="InterPro" id="IPR045854">
    <property type="entry name" value="NO2/SO3_Rdtase_4Fe4S_sf"/>
</dbReference>
<dbReference type="NCBIfam" id="TIGR00612">
    <property type="entry name" value="ispG_gcpE"/>
    <property type="match status" value="1"/>
</dbReference>
<dbReference type="NCBIfam" id="NF001540">
    <property type="entry name" value="PRK00366.1"/>
    <property type="match status" value="1"/>
</dbReference>
<dbReference type="PANTHER" id="PTHR30454">
    <property type="entry name" value="4-HYDROXY-3-METHYLBUT-2-EN-1-YL DIPHOSPHATE SYNTHASE"/>
    <property type="match status" value="1"/>
</dbReference>
<dbReference type="PANTHER" id="PTHR30454:SF0">
    <property type="entry name" value="4-HYDROXY-3-METHYLBUT-2-EN-1-YL DIPHOSPHATE SYNTHASE (FERREDOXIN), CHLOROPLASTIC"/>
    <property type="match status" value="1"/>
</dbReference>
<dbReference type="Pfam" id="PF04551">
    <property type="entry name" value="GcpE"/>
    <property type="match status" value="1"/>
</dbReference>
<dbReference type="PIRSF" id="PIRSF004640">
    <property type="entry name" value="IspG"/>
    <property type="match status" value="1"/>
</dbReference>
<dbReference type="SUPFAM" id="SSF51717">
    <property type="entry name" value="Dihydropteroate synthetase-like"/>
    <property type="match status" value="1"/>
</dbReference>
<dbReference type="SUPFAM" id="SSF56014">
    <property type="entry name" value="Nitrite and sulphite reductase 4Fe-4S domain-like"/>
    <property type="match status" value="1"/>
</dbReference>
<gene>
    <name evidence="1" type="primary">ispG</name>
    <name type="ordered locus">Ecok1_24490</name>
    <name type="ORF">APECO1_4009</name>
</gene>
<reference key="1">
    <citation type="journal article" date="2007" name="J. Bacteriol.">
        <title>The genome sequence of avian pathogenic Escherichia coli strain O1:K1:H7 shares strong similarities with human extraintestinal pathogenic E. coli genomes.</title>
        <authorList>
            <person name="Johnson T.J."/>
            <person name="Kariyawasam S."/>
            <person name="Wannemuehler Y."/>
            <person name="Mangiamele P."/>
            <person name="Johnson S.J."/>
            <person name="Doetkott C."/>
            <person name="Skyberg J.A."/>
            <person name="Lynne A.M."/>
            <person name="Johnson J.R."/>
            <person name="Nolan L.K."/>
        </authorList>
    </citation>
    <scope>NUCLEOTIDE SEQUENCE [LARGE SCALE GENOMIC DNA]</scope>
</reference>
<organism>
    <name type="scientific">Escherichia coli O1:K1 / APEC</name>
    <dbReference type="NCBI Taxonomy" id="405955"/>
    <lineage>
        <taxon>Bacteria</taxon>
        <taxon>Pseudomonadati</taxon>
        <taxon>Pseudomonadota</taxon>
        <taxon>Gammaproteobacteria</taxon>
        <taxon>Enterobacterales</taxon>
        <taxon>Enterobacteriaceae</taxon>
        <taxon>Escherichia</taxon>
    </lineage>
</organism>
<name>ISPG_ECOK1</name>
<comment type="function">
    <text evidence="1">Converts 2C-methyl-D-erythritol 2,4-cyclodiphosphate (ME-2,4cPP) into 1-hydroxy-2-methyl-2-(E)-butenyl 4-diphosphate.</text>
</comment>
<comment type="catalytic activity">
    <reaction evidence="1">
        <text>(2E)-4-hydroxy-3-methylbut-2-enyl diphosphate + oxidized [flavodoxin] + H2O + 2 H(+) = 2-C-methyl-D-erythritol 2,4-cyclic diphosphate + reduced [flavodoxin]</text>
        <dbReference type="Rhea" id="RHEA:43604"/>
        <dbReference type="Rhea" id="RHEA-COMP:10622"/>
        <dbReference type="Rhea" id="RHEA-COMP:10623"/>
        <dbReference type="ChEBI" id="CHEBI:15377"/>
        <dbReference type="ChEBI" id="CHEBI:15378"/>
        <dbReference type="ChEBI" id="CHEBI:57618"/>
        <dbReference type="ChEBI" id="CHEBI:58210"/>
        <dbReference type="ChEBI" id="CHEBI:58483"/>
        <dbReference type="ChEBI" id="CHEBI:128753"/>
        <dbReference type="EC" id="1.17.7.3"/>
    </reaction>
</comment>
<comment type="cofactor">
    <cofactor evidence="1">
        <name>[4Fe-4S] cluster</name>
        <dbReference type="ChEBI" id="CHEBI:49883"/>
    </cofactor>
    <text evidence="1">Binds 1 [4Fe-4S] cluster.</text>
</comment>
<comment type="pathway">
    <text evidence="1">Isoprenoid biosynthesis; isopentenyl diphosphate biosynthesis via DXP pathway; isopentenyl diphosphate from 1-deoxy-D-xylulose 5-phosphate: step 5/6.</text>
</comment>
<comment type="similarity">
    <text evidence="1">Belongs to the IspG family.</text>
</comment>
<sequence length="372" mass="40684">MHNQAPIQRRKSTRIYVGNVPIGDGAPIAVQSMTNTRTTDVEATVNQIKALERVGADIVRVSVPTMDAAEAFKLIKQQVNVPLVADIHFDYRIALKVAEYGVDCLRINPGNIGNEERIRMVVDCARDKNIPIRIGVNAGSLEKDLQEKYGEPTPQALLESAMRHVDHLDRLNFDQFKVSVKASDVFLAVESYRLLAKQIDQPLHLGITEAGGARSGAVKSAIGLGLLLSEGIGDTLRVSLAADPVEEIKVGFDILKSLRIRSRGINFIACPTCSRQEFDVIGTVNALEQRLEDIITPMDVSIIGCVVNGPGEALVSTLGVTGGNKKSGLYEDGVRKDRLDNNDMIDQLEARIRAKASQLDEARRIDVQQVEK</sequence>
<proteinExistence type="inferred from homology"/>
<accession>A1AE53</accession>
<feature type="chain" id="PRO_1000011461" description="4-hydroxy-3-methylbut-2-en-1-yl diphosphate synthase (flavodoxin)">
    <location>
        <begin position="1"/>
        <end position="372"/>
    </location>
</feature>
<feature type="binding site" evidence="1">
    <location>
        <position position="270"/>
    </location>
    <ligand>
        <name>[4Fe-4S] cluster</name>
        <dbReference type="ChEBI" id="CHEBI:49883"/>
    </ligand>
</feature>
<feature type="binding site" evidence="1">
    <location>
        <position position="273"/>
    </location>
    <ligand>
        <name>[4Fe-4S] cluster</name>
        <dbReference type="ChEBI" id="CHEBI:49883"/>
    </ligand>
</feature>
<feature type="binding site" evidence="1">
    <location>
        <position position="305"/>
    </location>
    <ligand>
        <name>[4Fe-4S] cluster</name>
        <dbReference type="ChEBI" id="CHEBI:49883"/>
    </ligand>
</feature>
<feature type="binding site" evidence="1">
    <location>
        <position position="312"/>
    </location>
    <ligand>
        <name>[4Fe-4S] cluster</name>
        <dbReference type="ChEBI" id="CHEBI:49883"/>
    </ligand>
</feature>